<evidence type="ECO:0000269" key="1">
    <source>
    </source>
</evidence>
<evidence type="ECO:0000303" key="2">
    <source>
    </source>
</evidence>
<evidence type="ECO:0000305" key="3"/>
<evidence type="ECO:0000312" key="4">
    <source>
        <dbReference type="EMBL" id="ERA40830.1"/>
    </source>
</evidence>
<accession>P0DW35</accession>
<dbReference type="EMBL" id="AWEM01000032">
    <property type="protein sequence ID" value="ERA40830.1"/>
    <property type="molecule type" value="Genomic_DNA"/>
</dbReference>
<dbReference type="RefSeq" id="WP_001765256.1">
    <property type="nucleotide sequence ID" value="NZ_KE702725.1"/>
</dbReference>
<dbReference type="GO" id="GO:0005737">
    <property type="term" value="C:cytoplasm"/>
    <property type="evidence" value="ECO:0007669"/>
    <property type="project" value="UniProtKB-SubCell"/>
</dbReference>
<dbReference type="GO" id="GO:0051607">
    <property type="term" value="P:defense response to virus"/>
    <property type="evidence" value="ECO:0007669"/>
    <property type="project" value="UniProtKB-KW"/>
</dbReference>
<dbReference type="Pfam" id="PF25164">
    <property type="entry name" value="CoiA_N"/>
    <property type="match status" value="1"/>
</dbReference>
<reference key="1">
    <citation type="submission" date="2013-07" db="EMBL/GenBank/DDBJ databases">
        <title>The Genome Sequence of Escherichia coli UMEA 4076-1.</title>
        <authorList>
            <consortium name="The Broad Institute Genome Sequencing Platform"/>
            <consortium name="The Broad Institute Genome Sequencing Center for Infectious Disease"/>
            <person name="Feldgarden M."/>
            <person name="Frimodt-Moller N."/>
            <person name="Leihof R.F."/>
            <person name="Rasmussen L."/>
            <person name="Young S.K."/>
            <person name="Zeng Q."/>
            <person name="Gargeya S."/>
            <person name="Abouelleil A."/>
            <person name="Alvarado L."/>
            <person name="Berlin A.M."/>
            <person name="Chapman S.B."/>
            <person name="Gainer-Dewar J."/>
            <person name="Goldberg J."/>
            <person name="Gnerre S."/>
            <person name="Griggs A."/>
            <person name="Gujja S."/>
            <person name="Hansen M."/>
            <person name="Howarth C."/>
            <person name="Imamovic A."/>
            <person name="Larimer J."/>
            <person name="McCowan C."/>
            <person name="Murphy C."/>
            <person name="Pearson M."/>
            <person name="Poon T."/>
            <person name="Priest M."/>
            <person name="Roberts A."/>
            <person name="Saif S."/>
            <person name="Shea T."/>
            <person name="Sykes S."/>
            <person name="Wortman J."/>
            <person name="Nusbaum C."/>
            <person name="Birren B."/>
        </authorList>
    </citation>
    <scope>NUCLEOTIDE SEQUENCE [LARGE SCALE GENOMIC DNA]</scope>
    <source>
        <strain>UMEA 4076-1</strain>
    </source>
</reference>
<reference key="2">
    <citation type="journal article" date="2018" name="Science">
        <title>Systematic discovery of antiphage defense systems in the microbial pangenome.</title>
        <authorList>
            <person name="Doron S."/>
            <person name="Melamed S."/>
            <person name="Ofir G."/>
            <person name="Leavitt A."/>
            <person name="Lopatina A."/>
            <person name="Keren M."/>
            <person name="Amitai G."/>
            <person name="Sorek R."/>
        </authorList>
    </citation>
    <scope>FUNCTION</scope>
    <scope>DISRUPTION PHENOTYPE</scope>
    <source>
        <strain>UMEA 4076-1</strain>
    </source>
</reference>
<protein>
    <recommendedName>
        <fullName evidence="2">Druantia protein DruB</fullName>
    </recommendedName>
</protein>
<comment type="function">
    <text evidence="1">Component of antiviral defense system Druantia type I, composed of DruA, DruB, DruC, DruD and DruE. Expression of Druantia in E.coli (strain MG1655) confers resistance to phage lambda, SECphi18, SECphi27 and T4.</text>
</comment>
<comment type="subcellular location">
    <subcellularLocation>
        <location evidence="3">Cytoplasm</location>
    </subcellularLocation>
</comment>
<comment type="disruption phenotype">
    <text evidence="1">When this gene is missing the Druantia system does not confer resistance to SECphi27 in E.coli.</text>
</comment>
<sequence length="548" mass="60969">MNYAIDKFTGTLILAARATKYAQYVCPVCKKGVNLRKGKVIPPYFAHLPGHGTSDCENFVPGNSIIIETIKTISKRYMDLRLLIPVGSNSREWSLELVLPTCNLCRAKITLDVGGRSQTLDMRSMVKSRQIGAELSVKSYRIVSYSGEPDPKFVTEVERECPGLPSEGAAVFTALGRGASKGFPRAQELRCTETFAFLWRHPVAPDFPDELEIKSLASKQGWNLALVTIPEVPSVESISWLKSFTYLPVVPARTSITAIWPFLNQKTSINHVECVHSDTILLSANMAPTSSENVGPTMYAQGSSLLLSAVGVEKSPAFFILNPGENDFVGVSGSIEQDVNLFFSFYKKNVSVPRKYPSIDLVFTKRNKEKTIVSLHQRRCIEVMMEARMFGHKLEYMSMPSGVEGVARIQRQTESSVIKLVSNDDIAAHDKSMRLLSPVALSQLSDCLANLTCHVEIDFLGLGKIFLPSSSMLSLDDGEFIELSPNLRSRILSFILQMGHTLHGFSLNNDFLLVEKLVDLQPEPHLLPHYRALVKEVKTNGFECNRFR</sequence>
<organism>
    <name type="scientific">Escherichia coli (strain UMEA 4076-1)</name>
    <dbReference type="NCBI Taxonomy" id="1281278"/>
    <lineage>
        <taxon>Bacteria</taxon>
        <taxon>Pseudomonadati</taxon>
        <taxon>Pseudomonadota</taxon>
        <taxon>Gammaproteobacteria</taxon>
        <taxon>Enterobacterales</taxon>
        <taxon>Enterobacteriaceae</taxon>
        <taxon>Escherichia</taxon>
    </lineage>
</organism>
<proteinExistence type="predicted"/>
<name>DRUB_ECOU4</name>
<gene>
    <name evidence="2" type="primary">druB</name>
    <name evidence="4" type="ORF">H003_04355</name>
</gene>
<keyword id="KW-0051">Antiviral defense</keyword>
<keyword id="KW-0963">Cytoplasm</keyword>
<feature type="chain" id="PRO_0000456315" description="Druantia protein DruB">
    <location>
        <begin position="1"/>
        <end position="548"/>
    </location>
</feature>